<dbReference type="EMBL" id="BY182441">
    <property type="status" value="NOT_ANNOTATED_CDS"/>
    <property type="molecule type" value="mRNA"/>
</dbReference>
<dbReference type="EMBL" id="AC166349">
    <property type="status" value="NOT_ANNOTATED_CDS"/>
    <property type="molecule type" value="Genomic_DNA"/>
</dbReference>
<dbReference type="EMBL" id="BC002230">
    <property type="protein sequence ID" value="AAH02230.1"/>
    <property type="molecule type" value="mRNA"/>
</dbReference>
<dbReference type="EMBL" id="BC025577">
    <property type="protein sequence ID" value="AAH25577.1"/>
    <property type="status" value="ALT_INIT"/>
    <property type="molecule type" value="mRNA"/>
</dbReference>
<dbReference type="EMBL" id="BC051175">
    <property type="protein sequence ID" value="AAH51175.1"/>
    <property type="status" value="ALT_SEQ"/>
    <property type="molecule type" value="mRNA"/>
</dbReference>
<dbReference type="CCDS" id="CCDS70414.1"/>
<dbReference type="RefSeq" id="NP_001277232.1">
    <property type="nucleotide sequence ID" value="NM_001290303.1"/>
</dbReference>
<dbReference type="BioGRID" id="229964">
    <property type="interactions" value="2"/>
</dbReference>
<dbReference type="FunCoup" id="Q80XC6">
    <property type="interactions" value="4177"/>
</dbReference>
<dbReference type="IntAct" id="Q80XC6">
    <property type="interactions" value="1"/>
</dbReference>
<dbReference type="MINT" id="Q80XC6"/>
<dbReference type="STRING" id="10090.ENSMUSP00000021596"/>
<dbReference type="iPTMnet" id="Q80XC6"/>
<dbReference type="PhosphoSitePlus" id="Q80XC6"/>
<dbReference type="jPOST" id="Q80XC6"/>
<dbReference type="PaxDb" id="10090-ENSMUSP00000021596"/>
<dbReference type="PeptideAtlas" id="Q80XC6"/>
<dbReference type="ProteomicsDB" id="253013"/>
<dbReference type="Pumba" id="Q80XC6"/>
<dbReference type="Antibodypedia" id="26518">
    <property type="antibodies" value="24 antibodies from 11 providers"/>
</dbReference>
<dbReference type="Ensembl" id="ENSMUST00000021596.9">
    <property type="protein sequence ID" value="ENSMUSP00000021596.8"/>
    <property type="gene ID" value="ENSMUSG00000021179.9"/>
</dbReference>
<dbReference type="GeneID" id="217827"/>
<dbReference type="KEGG" id="mmu:217827"/>
<dbReference type="UCSC" id="uc007oso.2">
    <property type="organism name" value="mouse"/>
</dbReference>
<dbReference type="AGR" id="MGI:2670969"/>
<dbReference type="CTD" id="55051"/>
<dbReference type="MGI" id="MGI:2670969">
    <property type="gene designation" value="Nrde2"/>
</dbReference>
<dbReference type="VEuPathDB" id="HostDB:ENSMUSG00000021179"/>
<dbReference type="eggNOG" id="KOG1972">
    <property type="taxonomic scope" value="Eukaryota"/>
</dbReference>
<dbReference type="GeneTree" id="ENSGT00390000005524"/>
<dbReference type="HOGENOM" id="CLU_007550_1_0_1"/>
<dbReference type="InParanoid" id="Q80XC6"/>
<dbReference type="OMA" id="MRDKELH"/>
<dbReference type="OrthoDB" id="297219at2759"/>
<dbReference type="PhylomeDB" id="Q80XC6"/>
<dbReference type="TreeFam" id="TF323791"/>
<dbReference type="BioGRID-ORCS" id="217827">
    <property type="hits" value="9 hits in 72 CRISPR screens"/>
</dbReference>
<dbReference type="PRO" id="PR:Q80XC6"/>
<dbReference type="Proteomes" id="UP000000589">
    <property type="component" value="Chromosome 12"/>
</dbReference>
<dbReference type="RNAct" id="Q80XC6">
    <property type="molecule type" value="protein"/>
</dbReference>
<dbReference type="Bgee" id="ENSMUSG00000021179">
    <property type="expression patterns" value="Expressed in humerus cartilage element and 255 other cell types or tissues"/>
</dbReference>
<dbReference type="ExpressionAtlas" id="Q80XC6">
    <property type="expression patterns" value="baseline and differential"/>
</dbReference>
<dbReference type="GO" id="GO:0016607">
    <property type="term" value="C:nuclear speck"/>
    <property type="evidence" value="ECO:0000250"/>
    <property type="project" value="UniProtKB"/>
</dbReference>
<dbReference type="GO" id="GO:0005730">
    <property type="term" value="C:nucleolus"/>
    <property type="evidence" value="ECO:0000250"/>
    <property type="project" value="UniProtKB"/>
</dbReference>
<dbReference type="GO" id="GO:0005654">
    <property type="term" value="C:nucleoplasm"/>
    <property type="evidence" value="ECO:0000250"/>
    <property type="project" value="UniProtKB"/>
</dbReference>
<dbReference type="GO" id="GO:0005634">
    <property type="term" value="C:nucleus"/>
    <property type="evidence" value="ECO:0000250"/>
    <property type="project" value="UniProtKB"/>
</dbReference>
<dbReference type="GO" id="GO:0051301">
    <property type="term" value="P:cell division"/>
    <property type="evidence" value="ECO:0007669"/>
    <property type="project" value="UniProtKB-KW"/>
</dbReference>
<dbReference type="GO" id="GO:0006974">
    <property type="term" value="P:DNA damage response"/>
    <property type="evidence" value="ECO:0000250"/>
    <property type="project" value="UniProtKB"/>
</dbReference>
<dbReference type="GO" id="GO:0000278">
    <property type="term" value="P:mitotic cell cycle"/>
    <property type="evidence" value="ECO:0000250"/>
    <property type="project" value="UniProtKB"/>
</dbReference>
<dbReference type="GO" id="GO:0006397">
    <property type="term" value="P:mRNA processing"/>
    <property type="evidence" value="ECO:0007669"/>
    <property type="project" value="UniProtKB-KW"/>
</dbReference>
<dbReference type="GO" id="GO:0048255">
    <property type="term" value="P:mRNA stabilization"/>
    <property type="evidence" value="ECO:0000250"/>
    <property type="project" value="UniProtKB"/>
</dbReference>
<dbReference type="GO" id="GO:0046833">
    <property type="term" value="P:positive regulation of RNA export from nucleus"/>
    <property type="evidence" value="ECO:0000250"/>
    <property type="project" value="UniProtKB"/>
</dbReference>
<dbReference type="GO" id="GO:0008380">
    <property type="term" value="P:RNA splicing"/>
    <property type="evidence" value="ECO:0000250"/>
    <property type="project" value="UniProtKB"/>
</dbReference>
<dbReference type="CDD" id="cd22200">
    <property type="entry name" value="NRDE2_MID"/>
    <property type="match status" value="1"/>
</dbReference>
<dbReference type="FunFam" id="1.25.40.10:FF:003653">
    <property type="entry name" value="NRDE-2, necessary for RNA interference, domain containing"/>
    <property type="match status" value="1"/>
</dbReference>
<dbReference type="FunFam" id="1.25.40.10:FF:000185">
    <property type="entry name" value="NRDE-2, necessary for RNA interference, domain-containing"/>
    <property type="match status" value="1"/>
</dbReference>
<dbReference type="Gene3D" id="1.25.40.10">
    <property type="entry name" value="Tetratricopeptide repeat domain"/>
    <property type="match status" value="3"/>
</dbReference>
<dbReference type="InterPro" id="IPR003107">
    <property type="entry name" value="HAT"/>
</dbReference>
<dbReference type="InterPro" id="IPR013633">
    <property type="entry name" value="NRDE-2"/>
</dbReference>
<dbReference type="InterPro" id="IPR011990">
    <property type="entry name" value="TPR-like_helical_dom_sf"/>
</dbReference>
<dbReference type="PANTHER" id="PTHR13471:SF0">
    <property type="entry name" value="NUCLEAR EXOSOME REGULATOR NRDE2"/>
    <property type="match status" value="1"/>
</dbReference>
<dbReference type="PANTHER" id="PTHR13471">
    <property type="entry name" value="TETRATRICOPEPTIDE-LIKE HELICAL"/>
    <property type="match status" value="1"/>
</dbReference>
<dbReference type="Pfam" id="PF08424">
    <property type="entry name" value="NRDE-2"/>
    <property type="match status" value="1"/>
</dbReference>
<dbReference type="SMART" id="SM00386">
    <property type="entry name" value="HAT"/>
    <property type="match status" value="5"/>
</dbReference>
<dbReference type="SUPFAM" id="SSF48452">
    <property type="entry name" value="TPR-like"/>
    <property type="match status" value="1"/>
</dbReference>
<sequence length="1172" mass="133467">MALFPAFADVSEASGDGAFRKELDWLSNPSFRVGNLTSLSRQTEEVTALASEGSPPPRYSFIRSPLKSELSGESNTSEKLAQTSRKKKKEKKKRRKHQHHRKTKRRHEQLSSSGSESDTEAGKDRASRSIRDDQKEAEKPCQGSNAAAAVAAAAGHRSIWLEDIHDLTDVFRTDKKPDPANWEYKSLYRGDIARYKRKGDSCLGINPKKQCISWEGASAAKKHSHRHLERYFTKKNVGLMRTEGIAVCSNPEPASSEPVTFIPVKDSAEAATPVTSWLNPLGIYDQSTTQWLQGQGPAEQESKQPDSQQDRENAALKARVEEFNRRVRENPWDTQLWMAFVAFQDEVMRSPGIYALGEGEQEKHRKSLKLLLEKKLAVLERAIESNPGSVELKLAKLQLCSEFWEPSALAKEWQKLLFLHPNNTSLWQRYLSFCQSQFGTFSVSKLHSLYGKCLSTLSAVKDGSMLSHPVLPGTEEAMFGLFLQQCHFLRQAGHSEKVISLFQAMVDFTFFKPDSVKELPTKVQVEFFEPFWDSGEPRVGEKGARGWRAWMHQQERGGWVLITPDEDDEEPEEEDQEIKDKTLPRWQIWLAVERSRDQRHWRPWRPDKTKKQTEEDCEDPERQVLFDDIGQSLIRLSSPDLQFQLIQAFLQFLGVPSGFLPPASCLYLAMDESSIFESELYDEKPLTYFNPSFSGISCVGSMEQLGRPRWTKGHNREGEEFVRNVFHLVLPLLAGKQKSQLSLSWLRYEIAKVIWCLHTKKKRLKSQGKSCKKLAKNLLKEPENRNNFCLWKQYAHLEWLLGNTEDARKVFDTALSMAGSSELKDRELCELSLLYAELEMELSPDSRGATTGRAVHILTRLTESSPYGPYTGQVSSTQVLKARKAYELALQDCLGQSCASSPAPAEALDCLGSLVRCFMLFQYLTVGIDAAVQIYGRVFAKLKGSARLEDPGPEDSTSSQSLTNVLEAVSMMHTSLLRFHMNVCVYPLAPLRETLSDALKLYPGNQVLWRAYVQIQNKSHSANKTRRFFDTVTRSAKHLEPWLFAIEAEKLRKKLVESVQRVGGREVHATIPETGLTHRIRALFENAIRSDKGNQCPLLWRMYLNFLVSLGNKERSKGVFYKALQSCPWAKVLYMDAMEYFPDELQEILDVMTEKELRVRLPLEELELLLED</sequence>
<keyword id="KW-0007">Acetylation</keyword>
<keyword id="KW-0131">Cell cycle</keyword>
<keyword id="KW-0132">Cell division</keyword>
<keyword id="KW-0175">Coiled coil</keyword>
<keyword id="KW-0227">DNA damage</keyword>
<keyword id="KW-0498">Mitosis</keyword>
<keyword id="KW-0507">mRNA processing</keyword>
<keyword id="KW-0508">mRNA splicing</keyword>
<keyword id="KW-0539">Nucleus</keyword>
<keyword id="KW-1185">Reference proteome</keyword>
<keyword id="KW-0677">Repeat</keyword>
<comment type="function">
    <text evidence="1">Protein of the nuclear speckles that regulates RNA degradation and export from the nucleus through its interaction with MTREX an essential factor directing various RNAs to exosomal degradation. Changes the conformation of MTREX, precluding its association with the nuclear exosome and interaction with proteins required for its function in RNA exosomal degradation. Negatively regulates, for instance, the degradation of mRNAs and lncRNAs by inhibiting their MTREX-mediated recruitment to nuclear exosome. By preventing the degradation of RNAs in the nucleus, it promotes their export to the cytoplasm (By similarity). U5 snRNP-associated RNA splicing factor which is required for efficient splicing of CEP131 pre-mRNA and plays an important role in centrosome maturation, integrity and function during mitosis (By similarity). Suppresses intron retention in a subset of pre-mRNAs containing short, GC-rich introns with relatively weak 5' and 3' splice sites (By similarity). Plays a role in DNA damage response (By similarity).</text>
</comment>
<comment type="subunit">
    <text evidence="1">Interacts with MTREX; the interaction is direct and stabilizes NRDE2 (By similarity). Interacts with EXOSC10, EFTUD2 and EIF4A3 (By similarity).</text>
</comment>
<comment type="subcellular location">
    <subcellularLocation>
        <location evidence="1">Nucleus speckle</location>
    </subcellularLocation>
    <subcellularLocation>
        <location evidence="1">Nucleus</location>
        <location evidence="1">Nucleolus</location>
    </subcellularLocation>
    <subcellularLocation>
        <location evidence="1">Nucleus</location>
        <location evidence="1">Nucleoplasm</location>
    </subcellularLocation>
    <subcellularLocation>
        <location evidence="1">Nucleus</location>
    </subcellularLocation>
</comment>
<comment type="domain">
    <text evidence="1">The MID/MTR4-interacting domain is necessary and sufficient to mediate interaction with MTREX.</text>
</comment>
<comment type="similarity">
    <text evidence="4">Belongs to the NRDE2 family.</text>
</comment>
<comment type="sequence caution" evidence="4">
    <conflict type="erroneous initiation">
        <sequence resource="EMBL-CDS" id="AAH25577"/>
    </conflict>
    <text>Truncated N-terminus.</text>
</comment>
<comment type="sequence caution" evidence="4">
    <conflict type="erroneous termination">
        <sequence resource="EMBL-CDS" id="AAH51175"/>
    </conflict>
    <text>Truncated C-terminus.</text>
</comment>
<comment type="sequence caution" evidence="4">
    <conflict type="frameshift">
        <sequence resource="EMBL" id="BY182441"/>
    </conflict>
</comment>
<evidence type="ECO:0000250" key="1">
    <source>
        <dbReference type="UniProtKB" id="Q9H7Z3"/>
    </source>
</evidence>
<evidence type="ECO:0000255" key="2"/>
<evidence type="ECO:0000256" key="3">
    <source>
        <dbReference type="SAM" id="MobiDB-lite"/>
    </source>
</evidence>
<evidence type="ECO:0000305" key="4"/>
<protein>
    <recommendedName>
        <fullName evidence="4">Nuclear exosome regulator NRDE2</fullName>
    </recommendedName>
    <alternativeName>
        <fullName evidence="4">Protein NRDE2 homolog</fullName>
    </alternativeName>
</protein>
<name>NRDE2_MOUSE</name>
<organism>
    <name type="scientific">Mus musculus</name>
    <name type="common">Mouse</name>
    <dbReference type="NCBI Taxonomy" id="10090"/>
    <lineage>
        <taxon>Eukaryota</taxon>
        <taxon>Metazoa</taxon>
        <taxon>Chordata</taxon>
        <taxon>Craniata</taxon>
        <taxon>Vertebrata</taxon>
        <taxon>Euteleostomi</taxon>
        <taxon>Mammalia</taxon>
        <taxon>Eutheria</taxon>
        <taxon>Euarchontoglires</taxon>
        <taxon>Glires</taxon>
        <taxon>Rodentia</taxon>
        <taxon>Myomorpha</taxon>
        <taxon>Muroidea</taxon>
        <taxon>Muridae</taxon>
        <taxon>Murinae</taxon>
        <taxon>Mus</taxon>
        <taxon>Mus</taxon>
    </lineage>
</organism>
<feature type="initiator methionine" description="Removed" evidence="1">
    <location>
        <position position="1"/>
    </location>
</feature>
<feature type="chain" id="PRO_0000089908" description="Nuclear exosome regulator NRDE2">
    <location>
        <begin position="2"/>
        <end position="1172"/>
    </location>
</feature>
<feature type="repeat" description="HAT 1">
    <location>
        <begin position="314"/>
        <end position="346"/>
    </location>
</feature>
<feature type="repeat" description="HAT 2">
    <location>
        <begin position="404"/>
        <end position="436"/>
    </location>
</feature>
<feature type="repeat" description="HAT 3">
    <location>
        <begin position="766"/>
        <end position="800"/>
    </location>
</feature>
<feature type="repeat" description="HAT 4">
    <location>
        <begin position="986"/>
        <end position="1018"/>
    </location>
</feature>
<feature type="repeat" description="HAT 5">
    <location>
        <begin position="1075"/>
        <end position="1109"/>
    </location>
</feature>
<feature type="region of interest" description="Disordered" evidence="3">
    <location>
        <begin position="46"/>
        <end position="144"/>
    </location>
</feature>
<feature type="region of interest" description="MID/MTR4-interacting domain" evidence="1">
    <location>
        <begin position="171"/>
        <end position="275"/>
    </location>
</feature>
<feature type="region of interest" description="Disordered" evidence="3">
    <location>
        <begin position="292"/>
        <end position="313"/>
    </location>
</feature>
<feature type="coiled-coil region" evidence="2">
    <location>
        <begin position="78"/>
        <end position="330"/>
    </location>
</feature>
<feature type="compositionally biased region" description="Polar residues" evidence="3">
    <location>
        <begin position="71"/>
        <end position="83"/>
    </location>
</feature>
<feature type="compositionally biased region" description="Basic residues" evidence="3">
    <location>
        <begin position="84"/>
        <end position="107"/>
    </location>
</feature>
<feature type="compositionally biased region" description="Basic and acidic residues" evidence="3">
    <location>
        <begin position="120"/>
        <end position="139"/>
    </location>
</feature>
<feature type="compositionally biased region" description="Basic and acidic residues" evidence="3">
    <location>
        <begin position="300"/>
        <end position="313"/>
    </location>
</feature>
<feature type="modified residue" description="N-acetylalanine" evidence="1">
    <location>
        <position position="2"/>
    </location>
</feature>
<feature type="sequence conflict" description="In Ref. 3; AAH51175." evidence="4" ref="3">
    <original>KELDWLSN</original>
    <variation>VKVRLAEH</variation>
    <location>
        <begin position="21"/>
        <end position="28"/>
    </location>
</feature>
<feature type="sequence conflict" description="In Ref. 1; AAH25577." evidence="4" ref="1">
    <original>R</original>
    <variation>H</variation>
    <location>
        <position position="707"/>
    </location>
</feature>
<feature type="sequence conflict" description="In Ref. 1; AAH25577." evidence="4" ref="1">
    <original>LS</original>
    <variation>VC</variation>
    <location>
        <begin position="741"/>
        <end position="742"/>
    </location>
</feature>
<reference key="1">
    <citation type="journal article" date="2005" name="Science">
        <title>The transcriptional landscape of the mammalian genome.</title>
        <authorList>
            <person name="Carninci P."/>
            <person name="Kasukawa T."/>
            <person name="Katayama S."/>
            <person name="Gough J."/>
            <person name="Frith M.C."/>
            <person name="Maeda N."/>
            <person name="Oyama R."/>
            <person name="Ravasi T."/>
            <person name="Lenhard B."/>
            <person name="Wells C."/>
            <person name="Kodzius R."/>
            <person name="Shimokawa K."/>
            <person name="Bajic V.B."/>
            <person name="Brenner S.E."/>
            <person name="Batalov S."/>
            <person name="Forrest A.R."/>
            <person name="Zavolan M."/>
            <person name="Davis M.J."/>
            <person name="Wilming L.G."/>
            <person name="Aidinis V."/>
            <person name="Allen J.E."/>
            <person name="Ambesi-Impiombato A."/>
            <person name="Apweiler R."/>
            <person name="Aturaliya R.N."/>
            <person name="Bailey T.L."/>
            <person name="Bansal M."/>
            <person name="Baxter L."/>
            <person name="Beisel K.W."/>
            <person name="Bersano T."/>
            <person name="Bono H."/>
            <person name="Chalk A.M."/>
            <person name="Chiu K.P."/>
            <person name="Choudhary V."/>
            <person name="Christoffels A."/>
            <person name="Clutterbuck D.R."/>
            <person name="Crowe M.L."/>
            <person name="Dalla E."/>
            <person name="Dalrymple B.P."/>
            <person name="de Bono B."/>
            <person name="Della Gatta G."/>
            <person name="di Bernardo D."/>
            <person name="Down T."/>
            <person name="Engstrom P."/>
            <person name="Fagiolini M."/>
            <person name="Faulkner G."/>
            <person name="Fletcher C.F."/>
            <person name="Fukushima T."/>
            <person name="Furuno M."/>
            <person name="Futaki S."/>
            <person name="Gariboldi M."/>
            <person name="Georgii-Hemming P."/>
            <person name="Gingeras T.R."/>
            <person name="Gojobori T."/>
            <person name="Green R.E."/>
            <person name="Gustincich S."/>
            <person name="Harbers M."/>
            <person name="Hayashi Y."/>
            <person name="Hensch T.K."/>
            <person name="Hirokawa N."/>
            <person name="Hill D."/>
            <person name="Huminiecki L."/>
            <person name="Iacono M."/>
            <person name="Ikeo K."/>
            <person name="Iwama A."/>
            <person name="Ishikawa T."/>
            <person name="Jakt M."/>
            <person name="Kanapin A."/>
            <person name="Katoh M."/>
            <person name="Kawasawa Y."/>
            <person name="Kelso J."/>
            <person name="Kitamura H."/>
            <person name="Kitano H."/>
            <person name="Kollias G."/>
            <person name="Krishnan S.P."/>
            <person name="Kruger A."/>
            <person name="Kummerfeld S.K."/>
            <person name="Kurochkin I.V."/>
            <person name="Lareau L.F."/>
            <person name="Lazarevic D."/>
            <person name="Lipovich L."/>
            <person name="Liu J."/>
            <person name="Liuni S."/>
            <person name="McWilliam S."/>
            <person name="Madan Babu M."/>
            <person name="Madera M."/>
            <person name="Marchionni L."/>
            <person name="Matsuda H."/>
            <person name="Matsuzawa S."/>
            <person name="Miki H."/>
            <person name="Mignone F."/>
            <person name="Miyake S."/>
            <person name="Morris K."/>
            <person name="Mottagui-Tabar S."/>
            <person name="Mulder N."/>
            <person name="Nakano N."/>
            <person name="Nakauchi H."/>
            <person name="Ng P."/>
            <person name="Nilsson R."/>
            <person name="Nishiguchi S."/>
            <person name="Nishikawa S."/>
            <person name="Nori F."/>
            <person name="Ohara O."/>
            <person name="Okazaki Y."/>
            <person name="Orlando V."/>
            <person name="Pang K.C."/>
            <person name="Pavan W.J."/>
            <person name="Pavesi G."/>
            <person name="Pesole G."/>
            <person name="Petrovsky N."/>
            <person name="Piazza S."/>
            <person name="Reed J."/>
            <person name="Reid J.F."/>
            <person name="Ring B.Z."/>
            <person name="Ringwald M."/>
            <person name="Rost B."/>
            <person name="Ruan Y."/>
            <person name="Salzberg S.L."/>
            <person name="Sandelin A."/>
            <person name="Schneider C."/>
            <person name="Schoenbach C."/>
            <person name="Sekiguchi K."/>
            <person name="Semple C.A."/>
            <person name="Seno S."/>
            <person name="Sessa L."/>
            <person name="Sheng Y."/>
            <person name="Shibata Y."/>
            <person name="Shimada H."/>
            <person name="Shimada K."/>
            <person name="Silva D."/>
            <person name="Sinclair B."/>
            <person name="Sperling S."/>
            <person name="Stupka E."/>
            <person name="Sugiura K."/>
            <person name="Sultana R."/>
            <person name="Takenaka Y."/>
            <person name="Taki K."/>
            <person name="Tammoja K."/>
            <person name="Tan S.L."/>
            <person name="Tang S."/>
            <person name="Taylor M.S."/>
            <person name="Tegner J."/>
            <person name="Teichmann S.A."/>
            <person name="Ueda H.R."/>
            <person name="van Nimwegen E."/>
            <person name="Verardo R."/>
            <person name="Wei C.L."/>
            <person name="Yagi K."/>
            <person name="Yamanishi H."/>
            <person name="Zabarovsky E."/>
            <person name="Zhu S."/>
            <person name="Zimmer A."/>
            <person name="Hide W."/>
            <person name="Bult C."/>
            <person name="Grimmond S.M."/>
            <person name="Teasdale R.D."/>
            <person name="Liu E.T."/>
            <person name="Brusic V."/>
            <person name="Quackenbush J."/>
            <person name="Wahlestedt C."/>
            <person name="Mattick J.S."/>
            <person name="Hume D.A."/>
            <person name="Kai C."/>
            <person name="Sasaki D."/>
            <person name="Tomaru Y."/>
            <person name="Fukuda S."/>
            <person name="Kanamori-Katayama M."/>
            <person name="Suzuki M."/>
            <person name="Aoki J."/>
            <person name="Arakawa T."/>
            <person name="Iida J."/>
            <person name="Imamura K."/>
            <person name="Itoh M."/>
            <person name="Kato T."/>
            <person name="Kawaji H."/>
            <person name="Kawagashira N."/>
            <person name="Kawashima T."/>
            <person name="Kojima M."/>
            <person name="Kondo S."/>
            <person name="Konno H."/>
            <person name="Nakano K."/>
            <person name="Ninomiya N."/>
            <person name="Nishio T."/>
            <person name="Okada M."/>
            <person name="Plessy C."/>
            <person name="Shibata K."/>
            <person name="Shiraki T."/>
            <person name="Suzuki S."/>
            <person name="Tagami M."/>
            <person name="Waki K."/>
            <person name="Watahiki A."/>
            <person name="Okamura-Oho Y."/>
            <person name="Suzuki H."/>
            <person name="Kawai J."/>
            <person name="Hayashizaki Y."/>
        </authorList>
    </citation>
    <scope>NUCLEOTIDE SEQUENCE [LARGE SCALE MRNA]</scope>
</reference>
<reference key="2">
    <citation type="journal article" date="2009" name="PLoS Biol.">
        <title>Lineage-specific biology revealed by a finished genome assembly of the mouse.</title>
        <authorList>
            <person name="Church D.M."/>
            <person name="Goodstadt L."/>
            <person name="Hillier L.W."/>
            <person name="Zody M.C."/>
            <person name="Goldstein S."/>
            <person name="She X."/>
            <person name="Bult C.J."/>
            <person name="Agarwala R."/>
            <person name="Cherry J.L."/>
            <person name="DiCuccio M."/>
            <person name="Hlavina W."/>
            <person name="Kapustin Y."/>
            <person name="Meric P."/>
            <person name="Maglott D."/>
            <person name="Birtle Z."/>
            <person name="Marques A.C."/>
            <person name="Graves T."/>
            <person name="Zhou S."/>
            <person name="Teague B."/>
            <person name="Potamousis K."/>
            <person name="Churas C."/>
            <person name="Place M."/>
            <person name="Herschleb J."/>
            <person name="Runnheim R."/>
            <person name="Forrest D."/>
            <person name="Amos-Landgraf J."/>
            <person name="Schwartz D.C."/>
            <person name="Cheng Z."/>
            <person name="Lindblad-Toh K."/>
            <person name="Eichler E.E."/>
            <person name="Ponting C.P."/>
        </authorList>
    </citation>
    <scope>NUCLEOTIDE SEQUENCE [LARGE SCALE GENOMIC DNA]</scope>
    <source>
        <strain>C57BL/6J</strain>
    </source>
</reference>
<reference key="3">
    <citation type="journal article" date="2004" name="Genome Res.">
        <title>The status, quality, and expansion of the NIH full-length cDNA project: the Mammalian Gene Collection (MGC).</title>
        <authorList>
            <consortium name="The MGC Project Team"/>
        </authorList>
    </citation>
    <scope>NUCLEOTIDE SEQUENCE [LARGE SCALE MRNA] OF 21-1172</scope>
    <source>
        <tissue>Mammary tumor</tissue>
        <tissue>Olfactory epithelium</tissue>
    </source>
</reference>
<reference key="4">
    <citation type="journal article" date="2010" name="Cell">
        <title>A tissue-specific atlas of mouse protein phosphorylation and expression.</title>
        <authorList>
            <person name="Huttlin E.L."/>
            <person name="Jedrychowski M.P."/>
            <person name="Elias J.E."/>
            <person name="Goswami T."/>
            <person name="Rad R."/>
            <person name="Beausoleil S.A."/>
            <person name="Villen J."/>
            <person name="Haas W."/>
            <person name="Sowa M.E."/>
            <person name="Gygi S.P."/>
        </authorList>
    </citation>
    <scope>IDENTIFICATION BY MASS SPECTROMETRY [LARGE SCALE ANALYSIS]</scope>
    <source>
        <tissue>Spleen</tissue>
        <tissue>Testis</tissue>
    </source>
</reference>
<accession>Q80XC6</accession>
<accession>E9QKV8</accession>
<accession>Q8R3D7</accession>
<accession>Q99LT9</accession>
<gene>
    <name type="primary">Nrde2</name>
</gene>
<proteinExistence type="evidence at protein level"/>